<evidence type="ECO:0000255" key="1">
    <source>
        <dbReference type="HAMAP-Rule" id="MF_00323"/>
    </source>
</evidence>
<protein>
    <recommendedName>
        <fullName evidence="1">Ferrochelatase</fullName>
        <ecNumber evidence="1">4.98.1.1</ecNumber>
    </recommendedName>
    <alternativeName>
        <fullName evidence="1">Heme synthase</fullName>
    </alternativeName>
    <alternativeName>
        <fullName evidence="1">Protoheme ferro-lyase</fullName>
    </alternativeName>
</protein>
<gene>
    <name evidence="1" type="primary">hemH</name>
    <name type="ordered locus">BURPS668_3283</name>
</gene>
<comment type="function">
    <text evidence="1">Catalyzes the ferrous insertion into protoporphyrin IX.</text>
</comment>
<comment type="catalytic activity">
    <reaction evidence="1">
        <text>heme b + 2 H(+) = protoporphyrin IX + Fe(2+)</text>
        <dbReference type="Rhea" id="RHEA:22584"/>
        <dbReference type="ChEBI" id="CHEBI:15378"/>
        <dbReference type="ChEBI" id="CHEBI:29033"/>
        <dbReference type="ChEBI" id="CHEBI:57306"/>
        <dbReference type="ChEBI" id="CHEBI:60344"/>
        <dbReference type="EC" id="4.98.1.1"/>
    </reaction>
</comment>
<comment type="pathway">
    <text evidence="1">Porphyrin-containing compound metabolism; protoheme biosynthesis; protoheme from protoporphyrin-IX: step 1/1.</text>
</comment>
<comment type="subcellular location">
    <subcellularLocation>
        <location evidence="1">Cytoplasm</location>
    </subcellularLocation>
</comment>
<comment type="similarity">
    <text evidence="1">Belongs to the ferrochelatase family.</text>
</comment>
<keyword id="KW-0963">Cytoplasm</keyword>
<keyword id="KW-0350">Heme biosynthesis</keyword>
<keyword id="KW-0408">Iron</keyword>
<keyword id="KW-0456">Lyase</keyword>
<keyword id="KW-0479">Metal-binding</keyword>
<keyword id="KW-0627">Porphyrin biosynthesis</keyword>
<proteinExistence type="inferred from homology"/>
<reference key="1">
    <citation type="journal article" date="2010" name="Genome Biol. Evol.">
        <title>Continuing evolution of Burkholderia mallei through genome reduction and large-scale rearrangements.</title>
        <authorList>
            <person name="Losada L."/>
            <person name="Ronning C.M."/>
            <person name="DeShazer D."/>
            <person name="Woods D."/>
            <person name="Fedorova N."/>
            <person name="Kim H.S."/>
            <person name="Shabalina S.A."/>
            <person name="Pearson T.R."/>
            <person name="Brinkac L."/>
            <person name="Tan P."/>
            <person name="Nandi T."/>
            <person name="Crabtree J."/>
            <person name="Badger J."/>
            <person name="Beckstrom-Sternberg S."/>
            <person name="Saqib M."/>
            <person name="Schutzer S.E."/>
            <person name="Keim P."/>
            <person name="Nierman W.C."/>
        </authorList>
    </citation>
    <scope>NUCLEOTIDE SEQUENCE [LARGE SCALE GENOMIC DNA]</scope>
    <source>
        <strain>668</strain>
    </source>
</reference>
<name>HEMH_BURP6</name>
<feature type="chain" id="PRO_1000019284" description="Ferrochelatase">
    <location>
        <begin position="1"/>
        <end position="367"/>
    </location>
</feature>
<feature type="binding site" evidence="1">
    <location>
        <position position="226"/>
    </location>
    <ligand>
        <name>Fe cation</name>
        <dbReference type="ChEBI" id="CHEBI:24875"/>
    </ligand>
</feature>
<feature type="binding site" evidence="1">
    <location>
        <position position="307"/>
    </location>
    <ligand>
        <name>Fe cation</name>
        <dbReference type="ChEBI" id="CHEBI:24875"/>
    </ligand>
</feature>
<dbReference type="EC" id="4.98.1.1" evidence="1"/>
<dbReference type="EMBL" id="CP000570">
    <property type="protein sequence ID" value="ABN84662.1"/>
    <property type="molecule type" value="Genomic_DNA"/>
</dbReference>
<dbReference type="SMR" id="A3ND73"/>
<dbReference type="KEGG" id="bpd:BURPS668_3283"/>
<dbReference type="HOGENOM" id="CLU_018884_0_0_4"/>
<dbReference type="UniPathway" id="UPA00252">
    <property type="reaction ID" value="UER00325"/>
</dbReference>
<dbReference type="GO" id="GO:0005737">
    <property type="term" value="C:cytoplasm"/>
    <property type="evidence" value="ECO:0007669"/>
    <property type="project" value="UniProtKB-SubCell"/>
</dbReference>
<dbReference type="GO" id="GO:0004325">
    <property type="term" value="F:ferrochelatase activity"/>
    <property type="evidence" value="ECO:0007669"/>
    <property type="project" value="UniProtKB-UniRule"/>
</dbReference>
<dbReference type="GO" id="GO:0046872">
    <property type="term" value="F:metal ion binding"/>
    <property type="evidence" value="ECO:0007669"/>
    <property type="project" value="UniProtKB-KW"/>
</dbReference>
<dbReference type="GO" id="GO:0006783">
    <property type="term" value="P:heme biosynthetic process"/>
    <property type="evidence" value="ECO:0007669"/>
    <property type="project" value="UniProtKB-UniRule"/>
</dbReference>
<dbReference type="CDD" id="cd00419">
    <property type="entry name" value="Ferrochelatase_C"/>
    <property type="match status" value="1"/>
</dbReference>
<dbReference type="CDD" id="cd03411">
    <property type="entry name" value="Ferrochelatase_N"/>
    <property type="match status" value="1"/>
</dbReference>
<dbReference type="FunFam" id="3.40.50.1400:FF:000002">
    <property type="entry name" value="Ferrochelatase"/>
    <property type="match status" value="1"/>
</dbReference>
<dbReference type="Gene3D" id="3.40.50.1400">
    <property type="match status" value="2"/>
</dbReference>
<dbReference type="HAMAP" id="MF_00323">
    <property type="entry name" value="Ferrochelatase"/>
    <property type="match status" value="1"/>
</dbReference>
<dbReference type="InterPro" id="IPR001015">
    <property type="entry name" value="Ferrochelatase"/>
</dbReference>
<dbReference type="InterPro" id="IPR019772">
    <property type="entry name" value="Ferrochelatase_AS"/>
</dbReference>
<dbReference type="InterPro" id="IPR033644">
    <property type="entry name" value="Ferrochelatase_C"/>
</dbReference>
<dbReference type="InterPro" id="IPR033659">
    <property type="entry name" value="Ferrochelatase_N"/>
</dbReference>
<dbReference type="NCBIfam" id="TIGR00109">
    <property type="entry name" value="hemH"/>
    <property type="match status" value="1"/>
</dbReference>
<dbReference type="PANTHER" id="PTHR11108">
    <property type="entry name" value="FERROCHELATASE"/>
    <property type="match status" value="1"/>
</dbReference>
<dbReference type="PANTHER" id="PTHR11108:SF1">
    <property type="entry name" value="FERROCHELATASE, MITOCHONDRIAL"/>
    <property type="match status" value="1"/>
</dbReference>
<dbReference type="Pfam" id="PF00762">
    <property type="entry name" value="Ferrochelatase"/>
    <property type="match status" value="1"/>
</dbReference>
<dbReference type="SUPFAM" id="SSF53800">
    <property type="entry name" value="Chelatase"/>
    <property type="match status" value="1"/>
</dbReference>
<dbReference type="PROSITE" id="PS00534">
    <property type="entry name" value="FERROCHELATASE"/>
    <property type="match status" value="1"/>
</dbReference>
<sequence>MSFDSVPRHALSMRFDLEPPSHASAAHRVAVLLVNLGTPDAPTPRAVRRYLAQFLSDPRVVEIPQLVWQVILRTLILPLRGRASAKKYAAVWLPEGSPLRVYTERQVESVKPLFAANGYRVIVDYAMRYGTPSIADVLAQLKRAGAERVLLLPMYPQYSSSTTATAFDAAFAALGRMRNQPEVRTVRHYADHPAYIHALAEQVRQYWAAHGRPAFDAGDKLVLSFHGVPKRTLDLGDPYHDQCQQTAALLMSALGLTTFECRVTFQSRFGKAEWLQPYTAPTLKELGAAGVRRADVFCPGFTADCLETIEEIGIEVRDAFVHGGGKEFHRIPCLNASPAWIAALGEIAAENLQGWPVRVAMAPEAVS</sequence>
<organism>
    <name type="scientific">Burkholderia pseudomallei (strain 668)</name>
    <dbReference type="NCBI Taxonomy" id="320373"/>
    <lineage>
        <taxon>Bacteria</taxon>
        <taxon>Pseudomonadati</taxon>
        <taxon>Pseudomonadota</taxon>
        <taxon>Betaproteobacteria</taxon>
        <taxon>Burkholderiales</taxon>
        <taxon>Burkholderiaceae</taxon>
        <taxon>Burkholderia</taxon>
        <taxon>pseudomallei group</taxon>
    </lineage>
</organism>
<accession>A3ND73</accession>